<keyword id="KW-0963">Cytoplasm</keyword>
<keyword id="KW-0413">Isomerase</keyword>
<keyword id="KW-0464">Manganese</keyword>
<keyword id="KW-0479">Metal-binding</keyword>
<keyword id="KW-1185">Reference proteome</keyword>
<feature type="chain" id="PRO_1000062148" description="Phosphopentomutase">
    <location>
        <begin position="1"/>
        <end position="407"/>
    </location>
</feature>
<feature type="binding site" evidence="1">
    <location>
        <position position="10"/>
    </location>
    <ligand>
        <name>Mn(2+)</name>
        <dbReference type="ChEBI" id="CHEBI:29035"/>
        <label>1</label>
    </ligand>
</feature>
<feature type="binding site" evidence="1">
    <location>
        <position position="306"/>
    </location>
    <ligand>
        <name>Mn(2+)</name>
        <dbReference type="ChEBI" id="CHEBI:29035"/>
        <label>2</label>
    </ligand>
</feature>
<feature type="binding site" evidence="1">
    <location>
        <position position="311"/>
    </location>
    <ligand>
        <name>Mn(2+)</name>
        <dbReference type="ChEBI" id="CHEBI:29035"/>
        <label>2</label>
    </ligand>
</feature>
<feature type="binding site" evidence="1">
    <location>
        <position position="347"/>
    </location>
    <ligand>
        <name>Mn(2+)</name>
        <dbReference type="ChEBI" id="CHEBI:29035"/>
        <label>1</label>
    </ligand>
</feature>
<feature type="binding site" evidence="1">
    <location>
        <position position="348"/>
    </location>
    <ligand>
        <name>Mn(2+)</name>
        <dbReference type="ChEBI" id="CHEBI:29035"/>
        <label>1</label>
    </ligand>
</feature>
<feature type="binding site" evidence="1">
    <location>
        <position position="359"/>
    </location>
    <ligand>
        <name>Mn(2+)</name>
        <dbReference type="ChEBI" id="CHEBI:29035"/>
        <label>2</label>
    </ligand>
</feature>
<protein>
    <recommendedName>
        <fullName evidence="1">Phosphopentomutase</fullName>
        <ecNumber evidence="1">5.4.2.7</ecNumber>
    </recommendedName>
    <alternativeName>
        <fullName evidence="1">Phosphodeoxyribomutase</fullName>
    </alternativeName>
</protein>
<comment type="function">
    <text evidence="1">Isomerase that catalyzes the conversion of deoxy-ribose 1-phosphate (dRib-1-P) and ribose 1-phosphate (Rib-1-P) to deoxy-ribose 5-phosphate (dRib-5-P) and ribose 5-phosphate (Rib-5-P), respectively.</text>
</comment>
<comment type="catalytic activity">
    <reaction evidence="1">
        <text>2-deoxy-alpha-D-ribose 1-phosphate = 2-deoxy-D-ribose 5-phosphate</text>
        <dbReference type="Rhea" id="RHEA:27658"/>
        <dbReference type="ChEBI" id="CHEBI:57259"/>
        <dbReference type="ChEBI" id="CHEBI:62877"/>
        <dbReference type="EC" id="5.4.2.7"/>
    </reaction>
</comment>
<comment type="catalytic activity">
    <reaction evidence="1">
        <text>alpha-D-ribose 1-phosphate = D-ribose 5-phosphate</text>
        <dbReference type="Rhea" id="RHEA:18793"/>
        <dbReference type="ChEBI" id="CHEBI:57720"/>
        <dbReference type="ChEBI" id="CHEBI:78346"/>
        <dbReference type="EC" id="5.4.2.7"/>
    </reaction>
</comment>
<comment type="cofactor">
    <cofactor evidence="1">
        <name>Mn(2+)</name>
        <dbReference type="ChEBI" id="CHEBI:29035"/>
    </cofactor>
    <text evidence="1">Binds 2 manganese ions.</text>
</comment>
<comment type="pathway">
    <text evidence="1">Carbohydrate degradation; 2-deoxy-D-ribose 1-phosphate degradation; D-glyceraldehyde 3-phosphate and acetaldehyde from 2-deoxy-alpha-D-ribose 1-phosphate: step 1/2.</text>
</comment>
<comment type="subcellular location">
    <subcellularLocation>
        <location evidence="1">Cytoplasm</location>
    </subcellularLocation>
</comment>
<comment type="similarity">
    <text evidence="1">Belongs to the phosphopentomutase family.</text>
</comment>
<name>DEOB_ECO24</name>
<organism>
    <name type="scientific">Escherichia coli O139:H28 (strain E24377A / ETEC)</name>
    <dbReference type="NCBI Taxonomy" id="331111"/>
    <lineage>
        <taxon>Bacteria</taxon>
        <taxon>Pseudomonadati</taxon>
        <taxon>Pseudomonadota</taxon>
        <taxon>Gammaproteobacteria</taxon>
        <taxon>Enterobacterales</taxon>
        <taxon>Enterobacteriaceae</taxon>
        <taxon>Escherichia</taxon>
    </lineage>
</organism>
<gene>
    <name evidence="1" type="primary">deoB</name>
    <name type="ordered locus">EcE24377A_4982</name>
</gene>
<sequence length="407" mass="44370">MKRAFIMVLDSFGIGATEDAERFGDVGADTLGHIAEACAKGEADNGRKGPLNLPNLTRLGLAKAHEGSTGFIPAGMDGNAEVIGAYAWAHEMSSGKDTPSGHWEIAGVPVLFEWGYFSDHENSFPQELLDKLVERANLPGYLGNCHSSGTVILDQLGEEHMKTGKPIFYTSADSVFQIACHEETFGLDKLYELCEIAREELTNGGYNIGRVIARPFIGDKAGNFQRTGNRHDLAVEPPAPTVLQKLVDEKHGQVVSVGKIADIYANCGITKKVKATGLDALFDATIKEMKEAGDNTIVFTNFVDFDSSWGHRRDVAGYAAGLELFDRRLPELMSLLRDDDILILTADHGCDPTWTGTDHTREHIPVLVYGPKVKPGSLGHRETFADIGQTLAKYFGTSDMEYGKAMF</sequence>
<proteinExistence type="inferred from homology"/>
<accession>A7ZVS6</accession>
<evidence type="ECO:0000255" key="1">
    <source>
        <dbReference type="HAMAP-Rule" id="MF_00740"/>
    </source>
</evidence>
<reference key="1">
    <citation type="journal article" date="2008" name="J. Bacteriol.">
        <title>The pangenome structure of Escherichia coli: comparative genomic analysis of E. coli commensal and pathogenic isolates.</title>
        <authorList>
            <person name="Rasko D.A."/>
            <person name="Rosovitz M.J."/>
            <person name="Myers G.S.A."/>
            <person name="Mongodin E.F."/>
            <person name="Fricke W.F."/>
            <person name="Gajer P."/>
            <person name="Crabtree J."/>
            <person name="Sebaihia M."/>
            <person name="Thomson N.R."/>
            <person name="Chaudhuri R."/>
            <person name="Henderson I.R."/>
            <person name="Sperandio V."/>
            <person name="Ravel J."/>
        </authorList>
    </citation>
    <scope>NUCLEOTIDE SEQUENCE [LARGE SCALE GENOMIC DNA]</scope>
    <source>
        <strain>E24377A / ETEC</strain>
    </source>
</reference>
<dbReference type="EC" id="5.4.2.7" evidence="1"/>
<dbReference type="EMBL" id="CP000800">
    <property type="protein sequence ID" value="ABV20263.1"/>
    <property type="molecule type" value="Genomic_DNA"/>
</dbReference>
<dbReference type="RefSeq" id="WP_000816471.1">
    <property type="nucleotide sequence ID" value="NC_009801.1"/>
</dbReference>
<dbReference type="SMR" id="A7ZVS6"/>
<dbReference type="GeneID" id="89519362"/>
<dbReference type="KEGG" id="ecw:EcE24377A_4982"/>
<dbReference type="HOGENOM" id="CLU_053861_0_0_6"/>
<dbReference type="UniPathway" id="UPA00002">
    <property type="reaction ID" value="UER00467"/>
</dbReference>
<dbReference type="Proteomes" id="UP000001122">
    <property type="component" value="Chromosome"/>
</dbReference>
<dbReference type="GO" id="GO:0005829">
    <property type="term" value="C:cytosol"/>
    <property type="evidence" value="ECO:0007669"/>
    <property type="project" value="TreeGrafter"/>
</dbReference>
<dbReference type="GO" id="GO:0000287">
    <property type="term" value="F:magnesium ion binding"/>
    <property type="evidence" value="ECO:0007669"/>
    <property type="project" value="InterPro"/>
</dbReference>
<dbReference type="GO" id="GO:0030145">
    <property type="term" value="F:manganese ion binding"/>
    <property type="evidence" value="ECO:0007669"/>
    <property type="project" value="UniProtKB-UniRule"/>
</dbReference>
<dbReference type="GO" id="GO:0008973">
    <property type="term" value="F:phosphopentomutase activity"/>
    <property type="evidence" value="ECO:0007669"/>
    <property type="project" value="UniProtKB-UniRule"/>
</dbReference>
<dbReference type="GO" id="GO:0006018">
    <property type="term" value="P:2-deoxyribose 1-phosphate catabolic process"/>
    <property type="evidence" value="ECO:0007669"/>
    <property type="project" value="UniProtKB-UniRule"/>
</dbReference>
<dbReference type="GO" id="GO:0006015">
    <property type="term" value="P:5-phosphoribose 1-diphosphate biosynthetic process"/>
    <property type="evidence" value="ECO:0007669"/>
    <property type="project" value="UniProtKB-UniPathway"/>
</dbReference>
<dbReference type="GO" id="GO:0043094">
    <property type="term" value="P:metabolic compound salvage"/>
    <property type="evidence" value="ECO:0007669"/>
    <property type="project" value="InterPro"/>
</dbReference>
<dbReference type="GO" id="GO:0009117">
    <property type="term" value="P:nucleotide metabolic process"/>
    <property type="evidence" value="ECO:0007669"/>
    <property type="project" value="InterPro"/>
</dbReference>
<dbReference type="CDD" id="cd16009">
    <property type="entry name" value="PPM"/>
    <property type="match status" value="1"/>
</dbReference>
<dbReference type="FunFam" id="3.30.70.1250:FF:000001">
    <property type="entry name" value="Phosphopentomutase"/>
    <property type="match status" value="1"/>
</dbReference>
<dbReference type="Gene3D" id="3.40.720.10">
    <property type="entry name" value="Alkaline Phosphatase, subunit A"/>
    <property type="match status" value="1"/>
</dbReference>
<dbReference type="Gene3D" id="3.30.70.1250">
    <property type="entry name" value="Phosphopentomutase"/>
    <property type="match status" value="1"/>
</dbReference>
<dbReference type="HAMAP" id="MF_00740">
    <property type="entry name" value="Phosphopentomut"/>
    <property type="match status" value="1"/>
</dbReference>
<dbReference type="InterPro" id="IPR017850">
    <property type="entry name" value="Alkaline_phosphatase_core_sf"/>
</dbReference>
<dbReference type="InterPro" id="IPR010045">
    <property type="entry name" value="DeoB"/>
</dbReference>
<dbReference type="InterPro" id="IPR006124">
    <property type="entry name" value="Metalloenzyme"/>
</dbReference>
<dbReference type="InterPro" id="IPR024052">
    <property type="entry name" value="Phosphopentomutase_DeoB_cap_sf"/>
</dbReference>
<dbReference type="NCBIfam" id="TIGR01696">
    <property type="entry name" value="deoB"/>
    <property type="match status" value="1"/>
</dbReference>
<dbReference type="NCBIfam" id="NF003766">
    <property type="entry name" value="PRK05362.1"/>
    <property type="match status" value="1"/>
</dbReference>
<dbReference type="PANTHER" id="PTHR21110">
    <property type="entry name" value="PHOSPHOPENTOMUTASE"/>
    <property type="match status" value="1"/>
</dbReference>
<dbReference type="PANTHER" id="PTHR21110:SF0">
    <property type="entry name" value="PHOSPHOPENTOMUTASE"/>
    <property type="match status" value="1"/>
</dbReference>
<dbReference type="Pfam" id="PF01676">
    <property type="entry name" value="Metalloenzyme"/>
    <property type="match status" value="1"/>
</dbReference>
<dbReference type="PIRSF" id="PIRSF001491">
    <property type="entry name" value="Ppentomutase"/>
    <property type="match status" value="1"/>
</dbReference>
<dbReference type="SUPFAM" id="SSF53649">
    <property type="entry name" value="Alkaline phosphatase-like"/>
    <property type="match status" value="1"/>
</dbReference>
<dbReference type="SUPFAM" id="SSF143856">
    <property type="entry name" value="DeoB insert domain-like"/>
    <property type="match status" value="1"/>
</dbReference>